<accession>P0DXA7</accession>
<evidence type="ECO:0000250" key="1">
    <source>
        <dbReference type="UniProtKB" id="P0DXA4"/>
    </source>
</evidence>
<evidence type="ECO:0000255" key="2"/>
<evidence type="ECO:0000269" key="3">
    <source>
    </source>
</evidence>
<evidence type="ECO:0000303" key="4">
    <source>
    </source>
</evidence>
<evidence type="ECO:0000305" key="5"/>
<evidence type="ECO:0000305" key="6">
    <source>
    </source>
</evidence>
<evidence type="ECO:0000305" key="7">
    <source>
    </source>
</evidence>
<evidence type="ECO:0000312" key="8">
    <source>
        <dbReference type="EMBL" id="AKS70341.1"/>
    </source>
</evidence>
<gene>
    <name evidence="4" type="primary">cap15</name>
    <name evidence="8" type="ORF">OA96_00205</name>
</gene>
<keyword id="KW-0051">Antiviral defense</keyword>
<keyword id="KW-1003">Cell membrane</keyword>
<keyword id="KW-0472">Membrane</keyword>
<keyword id="KW-0547">Nucleotide-binding</keyword>
<keyword id="KW-0812">Transmembrane</keyword>
<keyword id="KW-1133">Transmembrane helix</keyword>
<protein>
    <recommendedName>
        <fullName evidence="4">CD-NTase-associated protein 15</fullName>
        <shortName evidence="4">Ssc-Cap15</shortName>
    </recommendedName>
</protein>
<comment type="function">
    <text evidence="1 3 6">Effector protein of a CBASS antivirus system (PubMed:37968393). CBASS (cyclic oligonucleotide-based antiphage signaling system) provides immunity against bacteriophage (PubMed:37968393). The CD-NTase protein (CdnE) synthesizes cyclic nucleotides in response to infection; these serve as specific second messenger signals (PubMed:37968393). The signals activate a diverse range of effectors, leading to bacterial cell death and thus abortive phage infection (PubMed:37968393). This system triggers membrane disruption without lysis (PubMed:37968393). A type I-B CBASS system (Probable) (PubMed:32839535, PubMed:37968393). Binds cyclic nucleotide second messenger 3',2'-cGAMP, probably oligomerizing, and induces cell membrane shrinkage and rupture, leading to cell death (By similarity).</text>
</comment>
<comment type="function">
    <text evidence="3">Protects S.aureus against phage infection. When the CBASS operon (cdnE-cap15) is introduced in S.aureus strain RN4220 there is strong protection against lytic DNA phages 80alpha-vir and phi-NM1-gamma-6 but little to no protection against phages phi-NM4-gamma-4 or phi-12-gamma-3 (PubMed:37968393).</text>
</comment>
<comment type="subunit">
    <text evidence="1">The beta barrel domain oligomerizes; in the presence of cyclic nucleotides (probably 3',2'-cGAMP) higher-level oligomers occur.</text>
</comment>
<comment type="subcellular location">
    <subcellularLocation>
        <location evidence="7">Cell membrane</location>
        <topology evidence="2">Multi-pass membrane protein</topology>
    </subcellularLocation>
</comment>
<comment type="domain">
    <text evidence="1">The C-terminus forms a minimal, eight-stranded beta barrel that probably oligomerizes.</text>
</comment>
<comment type="disruption phenotype">
    <text evidence="3">Loss of protection against phage in S.aureus strain RN4200.</text>
</comment>
<comment type="similarity">
    <text evidence="5">Belongs to the CBASS Cap15 membrane effector family.</text>
</comment>
<feature type="chain" id="PRO_0000459832" description="CD-NTase-associated protein 15">
    <location>
        <begin position="1"/>
        <end position="182"/>
    </location>
</feature>
<feature type="transmembrane region" description="Helical" evidence="2">
    <location>
        <begin position="11"/>
        <end position="31"/>
    </location>
</feature>
<feature type="transmembrane region" description="Helical" evidence="2">
    <location>
        <begin position="33"/>
        <end position="53"/>
    </location>
</feature>
<reference key="1">
    <citation type="journal article" date="2015" name="Genome Announc.">
        <title>Complete Genome Sequence and Methylome of Staphylococcus schleiferi, an Important Cause of Skin and Ear Infections in Veterinary Medicine.</title>
        <authorList>
            <person name="Misic A.M."/>
            <person name="Cain C.L."/>
            <person name="Morris D.O."/>
            <person name="Rankin S.C."/>
            <person name="Beiting D.P."/>
        </authorList>
    </citation>
    <scope>NUCLEOTIDE SEQUENCE [LARGE SCALE GENOMIC DNA]</scope>
    <source>
        <strain>2142-05</strain>
    </source>
</reference>
<reference key="2">
    <citation type="journal article" date="2020" name="Nat. Microbiol.">
        <title>Diversity and classification of cyclic-oligonucleotide-based anti-phage signalling systems.</title>
        <authorList>
            <person name="Millman A."/>
            <person name="Melamed S."/>
            <person name="Amitai G."/>
            <person name="Sorek R."/>
        </authorList>
    </citation>
    <scope>CLASSIFICATION AND NOMENCLATURE</scope>
</reference>
<reference key="3">
    <citation type="journal article" date="2023" name="Nature">
        <title>Bacterial cGAS senses a viral RNA to initiate immunity.</title>
        <authorList>
            <person name="Banh D.V."/>
            <person name="Roberts C.G."/>
            <person name="Morales-Amador A."/>
            <person name="Berryhill B.A."/>
            <person name="Chaudhry W."/>
            <person name="Levin B.R."/>
            <person name="Brady S.F."/>
            <person name="Marraffini L.A."/>
        </authorList>
    </citation>
    <scope>FUNCTION</scope>
    <scope>ANTIVIRAL DEFENSE</scope>
    <scope>SUBCELLULAR LOCATION</scope>
    <scope>DISRUPTION PHENOTYPE</scope>
    <source>
        <strain>2142-05</strain>
    </source>
</reference>
<organism>
    <name type="scientific">Staphylococcus schleiferi</name>
    <dbReference type="NCBI Taxonomy" id="1295"/>
    <lineage>
        <taxon>Bacteria</taxon>
        <taxon>Bacillati</taxon>
        <taxon>Bacillota</taxon>
        <taxon>Bacilli</taxon>
        <taxon>Bacillales</taxon>
        <taxon>Staphylococcaceae</taxon>
        <taxon>Staphylococcus</taxon>
    </lineage>
</organism>
<proteinExistence type="inferred from homology"/>
<sequence length="182" mass="21229">MNDKINHLIKITGWFTVIFFLLLIIVSCTVWQIGWIDIISYTVTISTFITIGYERFMWKWKLFRIFNKQADISGDYEATLRYFYGESGIKKVSVEIKQTFLTVNIELRSDEITSNSITADIIEEHGKNILYYTYITNPKAEFEKKNPINRGTTRLIVGENELTGKYWTGAETTGDLRLKKLK</sequence>
<dbReference type="EMBL" id="CP009762">
    <property type="protein sequence ID" value="AKS70341.1"/>
    <property type="molecule type" value="Genomic_DNA"/>
</dbReference>
<dbReference type="SMR" id="P0DXA7"/>
<dbReference type="KEGG" id="sscz:RN70_00375"/>
<dbReference type="GO" id="GO:0005886">
    <property type="term" value="C:plasma membrane"/>
    <property type="evidence" value="ECO:0007669"/>
    <property type="project" value="UniProtKB-SubCell"/>
</dbReference>
<dbReference type="GO" id="GO:0000166">
    <property type="term" value="F:nucleotide binding"/>
    <property type="evidence" value="ECO:0007669"/>
    <property type="project" value="UniProtKB-KW"/>
</dbReference>
<dbReference type="GO" id="GO:0051607">
    <property type="term" value="P:defense response to virus"/>
    <property type="evidence" value="ECO:0007669"/>
    <property type="project" value="UniProtKB-KW"/>
</dbReference>
<dbReference type="InterPro" id="IPR041208">
    <property type="entry name" value="Cap15"/>
</dbReference>
<dbReference type="Pfam" id="PF18153">
    <property type="entry name" value="Cap15_CD_rec"/>
    <property type="match status" value="1"/>
</dbReference>
<name>CAP15_STASC</name>